<sequence length="417" mass="45478">MSENLIIFNAKVVTPLGFSARKGKEMAELRILEKATVEVVDGIITYVGPNRGEVRDGYYHHFWHYNARGKCLLPGFVDSHTHFVFGGERAEEFSWRLKGESYMSIMQRGGGIASTVQATRELSFIHLRSKAEGLLKKMTAMGITTVEGKSGYGLNRETELLQLKVMRSLNKDEGVRVDIVPTFLGAHALPDEYRERPDDYIDFLIRELLPVIQRDSLAEFCDVFCEEGVFSIEQSRRLLTAAGDYGLLPKLHADEIVPLGGAELAAELGAVSADHLLHASDAGIEAMARKGVVATLLPLTAFALKEPYARGRDMIDAGCAVALATDLNPGSCFSGSIPLTFALACIHMQLTVEEAITALTLNGAAALNRADSIGSIEVGKKGDFVVLDSDNYHILPYYVGMNCVNTTIKGGMLYPSV</sequence>
<gene>
    <name evidence="1" type="primary">hutI</name>
    <name type="ordered locus">BF4146</name>
</gene>
<accession>Q64NP4</accession>
<feature type="chain" id="PRO_0000306435" description="Imidazolonepropionase">
    <location>
        <begin position="1"/>
        <end position="417"/>
    </location>
</feature>
<feature type="binding site" evidence="1">
    <location>
        <position position="80"/>
    </location>
    <ligand>
        <name>Fe(3+)</name>
        <dbReference type="ChEBI" id="CHEBI:29034"/>
    </ligand>
</feature>
<feature type="binding site" evidence="1">
    <location>
        <position position="80"/>
    </location>
    <ligand>
        <name>Zn(2+)</name>
        <dbReference type="ChEBI" id="CHEBI:29105"/>
    </ligand>
</feature>
<feature type="binding site" evidence="1">
    <location>
        <position position="82"/>
    </location>
    <ligand>
        <name>Fe(3+)</name>
        <dbReference type="ChEBI" id="CHEBI:29034"/>
    </ligand>
</feature>
<feature type="binding site" evidence="1">
    <location>
        <position position="82"/>
    </location>
    <ligand>
        <name>Zn(2+)</name>
        <dbReference type="ChEBI" id="CHEBI:29105"/>
    </ligand>
</feature>
<feature type="binding site" evidence="1">
    <location>
        <position position="89"/>
    </location>
    <ligand>
        <name>4-imidazolone-5-propanoate</name>
        <dbReference type="ChEBI" id="CHEBI:77893"/>
    </ligand>
</feature>
<feature type="binding site" evidence="1">
    <location>
        <position position="152"/>
    </location>
    <ligand>
        <name>4-imidazolone-5-propanoate</name>
        <dbReference type="ChEBI" id="CHEBI:77893"/>
    </ligand>
</feature>
<feature type="binding site" evidence="1">
    <location>
        <position position="152"/>
    </location>
    <ligand>
        <name>N-formimidoyl-L-glutamate</name>
        <dbReference type="ChEBI" id="CHEBI:58928"/>
    </ligand>
</feature>
<feature type="binding site" evidence="1">
    <location>
        <position position="187"/>
    </location>
    <ligand>
        <name>4-imidazolone-5-propanoate</name>
        <dbReference type="ChEBI" id="CHEBI:77893"/>
    </ligand>
</feature>
<feature type="binding site" evidence="1">
    <location>
        <position position="252"/>
    </location>
    <ligand>
        <name>Fe(3+)</name>
        <dbReference type="ChEBI" id="CHEBI:29034"/>
    </ligand>
</feature>
<feature type="binding site" evidence="1">
    <location>
        <position position="252"/>
    </location>
    <ligand>
        <name>Zn(2+)</name>
        <dbReference type="ChEBI" id="CHEBI:29105"/>
    </ligand>
</feature>
<feature type="binding site" evidence="1">
    <location>
        <position position="255"/>
    </location>
    <ligand>
        <name>4-imidazolone-5-propanoate</name>
        <dbReference type="ChEBI" id="CHEBI:77893"/>
    </ligand>
</feature>
<feature type="binding site" evidence="1">
    <location>
        <position position="326"/>
    </location>
    <ligand>
        <name>Fe(3+)</name>
        <dbReference type="ChEBI" id="CHEBI:29034"/>
    </ligand>
</feature>
<feature type="binding site" evidence="1">
    <location>
        <position position="326"/>
    </location>
    <ligand>
        <name>Zn(2+)</name>
        <dbReference type="ChEBI" id="CHEBI:29105"/>
    </ligand>
</feature>
<feature type="binding site" evidence="1">
    <location>
        <position position="328"/>
    </location>
    <ligand>
        <name>N-formimidoyl-L-glutamate</name>
        <dbReference type="ChEBI" id="CHEBI:58928"/>
    </ligand>
</feature>
<feature type="binding site" evidence="1">
    <location>
        <position position="330"/>
    </location>
    <ligand>
        <name>N-formimidoyl-L-glutamate</name>
        <dbReference type="ChEBI" id="CHEBI:58928"/>
    </ligand>
</feature>
<feature type="binding site" evidence="1">
    <location>
        <position position="331"/>
    </location>
    <ligand>
        <name>4-imidazolone-5-propanoate</name>
        <dbReference type="ChEBI" id="CHEBI:77893"/>
    </ligand>
</feature>
<organism>
    <name type="scientific">Bacteroides fragilis (strain YCH46)</name>
    <dbReference type="NCBI Taxonomy" id="295405"/>
    <lineage>
        <taxon>Bacteria</taxon>
        <taxon>Pseudomonadati</taxon>
        <taxon>Bacteroidota</taxon>
        <taxon>Bacteroidia</taxon>
        <taxon>Bacteroidales</taxon>
        <taxon>Bacteroidaceae</taxon>
        <taxon>Bacteroides</taxon>
    </lineage>
</organism>
<proteinExistence type="inferred from homology"/>
<protein>
    <recommendedName>
        <fullName evidence="1">Imidazolonepropionase</fullName>
        <ecNumber evidence="1">3.5.2.7</ecNumber>
    </recommendedName>
    <alternativeName>
        <fullName evidence="1">Imidazolone-5-propionate hydrolase</fullName>
    </alternativeName>
</protein>
<keyword id="KW-0963">Cytoplasm</keyword>
<keyword id="KW-0369">Histidine metabolism</keyword>
<keyword id="KW-0378">Hydrolase</keyword>
<keyword id="KW-0408">Iron</keyword>
<keyword id="KW-0479">Metal-binding</keyword>
<keyword id="KW-0862">Zinc</keyword>
<comment type="function">
    <text evidence="1">Catalyzes the hydrolytic cleavage of the carbon-nitrogen bond in imidazolone-5-propanoate to yield N-formimidoyl-L-glutamate. It is the third step in the universal histidine degradation pathway.</text>
</comment>
<comment type="catalytic activity">
    <reaction evidence="1">
        <text>4-imidazolone-5-propanoate + H2O = N-formimidoyl-L-glutamate</text>
        <dbReference type="Rhea" id="RHEA:23660"/>
        <dbReference type="ChEBI" id="CHEBI:15377"/>
        <dbReference type="ChEBI" id="CHEBI:58928"/>
        <dbReference type="ChEBI" id="CHEBI:77893"/>
        <dbReference type="EC" id="3.5.2.7"/>
    </reaction>
</comment>
<comment type="cofactor">
    <cofactor evidence="1">
        <name>Zn(2+)</name>
        <dbReference type="ChEBI" id="CHEBI:29105"/>
    </cofactor>
    <cofactor evidence="1">
        <name>Fe(3+)</name>
        <dbReference type="ChEBI" id="CHEBI:29034"/>
    </cofactor>
    <text evidence="1">Binds 1 zinc or iron ion per subunit.</text>
</comment>
<comment type="pathway">
    <text evidence="1">Amino-acid degradation; L-histidine degradation into L-glutamate; N-formimidoyl-L-glutamate from L-histidine: step 3/3.</text>
</comment>
<comment type="subcellular location">
    <subcellularLocation>
        <location evidence="1">Cytoplasm</location>
    </subcellularLocation>
</comment>
<comment type="similarity">
    <text evidence="1">Belongs to the metallo-dependent hydrolases superfamily. HutI family.</text>
</comment>
<reference key="1">
    <citation type="journal article" date="2004" name="Proc. Natl. Acad. Sci. U.S.A.">
        <title>Genomic analysis of Bacteroides fragilis reveals extensive DNA inversions regulating cell surface adaptation.</title>
        <authorList>
            <person name="Kuwahara T."/>
            <person name="Yamashita A."/>
            <person name="Hirakawa H."/>
            <person name="Nakayama H."/>
            <person name="Toh H."/>
            <person name="Okada N."/>
            <person name="Kuhara S."/>
            <person name="Hattori M."/>
            <person name="Hayashi T."/>
            <person name="Ohnishi Y."/>
        </authorList>
    </citation>
    <scope>NUCLEOTIDE SEQUENCE [LARGE SCALE GENOMIC DNA]</scope>
    <source>
        <strain>YCH46</strain>
    </source>
</reference>
<name>HUTI_BACFR</name>
<evidence type="ECO:0000255" key="1">
    <source>
        <dbReference type="HAMAP-Rule" id="MF_00372"/>
    </source>
</evidence>
<dbReference type="EC" id="3.5.2.7" evidence="1"/>
<dbReference type="EMBL" id="AP006841">
    <property type="protein sequence ID" value="BAD50888.1"/>
    <property type="molecule type" value="Genomic_DNA"/>
</dbReference>
<dbReference type="RefSeq" id="WP_011203599.1">
    <property type="nucleotide sequence ID" value="NC_006347.1"/>
</dbReference>
<dbReference type="RefSeq" id="YP_101422.1">
    <property type="nucleotide sequence ID" value="NC_006347.1"/>
</dbReference>
<dbReference type="SMR" id="Q64NP4"/>
<dbReference type="STRING" id="295405.BF4146"/>
<dbReference type="KEGG" id="bfr:BF4146"/>
<dbReference type="PATRIC" id="fig|295405.11.peg.3998"/>
<dbReference type="HOGENOM" id="CLU_041647_0_1_10"/>
<dbReference type="OrthoDB" id="9776455at2"/>
<dbReference type="UniPathway" id="UPA00379">
    <property type="reaction ID" value="UER00551"/>
</dbReference>
<dbReference type="Proteomes" id="UP000002197">
    <property type="component" value="Chromosome"/>
</dbReference>
<dbReference type="GO" id="GO:0005737">
    <property type="term" value="C:cytoplasm"/>
    <property type="evidence" value="ECO:0007669"/>
    <property type="project" value="UniProtKB-SubCell"/>
</dbReference>
<dbReference type="GO" id="GO:0050480">
    <property type="term" value="F:imidazolonepropionase activity"/>
    <property type="evidence" value="ECO:0007669"/>
    <property type="project" value="UniProtKB-UniRule"/>
</dbReference>
<dbReference type="GO" id="GO:0005506">
    <property type="term" value="F:iron ion binding"/>
    <property type="evidence" value="ECO:0007669"/>
    <property type="project" value="UniProtKB-UniRule"/>
</dbReference>
<dbReference type="GO" id="GO:0008270">
    <property type="term" value="F:zinc ion binding"/>
    <property type="evidence" value="ECO:0007669"/>
    <property type="project" value="UniProtKB-UniRule"/>
</dbReference>
<dbReference type="GO" id="GO:0019556">
    <property type="term" value="P:L-histidine catabolic process to glutamate and formamide"/>
    <property type="evidence" value="ECO:0007669"/>
    <property type="project" value="UniProtKB-UniPathway"/>
</dbReference>
<dbReference type="GO" id="GO:0019557">
    <property type="term" value="P:L-histidine catabolic process to glutamate and formate"/>
    <property type="evidence" value="ECO:0007669"/>
    <property type="project" value="UniProtKB-UniPathway"/>
</dbReference>
<dbReference type="CDD" id="cd01296">
    <property type="entry name" value="Imidazolone-5PH"/>
    <property type="match status" value="1"/>
</dbReference>
<dbReference type="FunFam" id="3.20.20.140:FF:000007">
    <property type="entry name" value="Imidazolonepropionase"/>
    <property type="match status" value="1"/>
</dbReference>
<dbReference type="Gene3D" id="3.20.20.140">
    <property type="entry name" value="Metal-dependent hydrolases"/>
    <property type="match status" value="1"/>
</dbReference>
<dbReference type="Gene3D" id="2.30.40.10">
    <property type="entry name" value="Urease, subunit C, domain 1"/>
    <property type="match status" value="1"/>
</dbReference>
<dbReference type="HAMAP" id="MF_00372">
    <property type="entry name" value="HutI"/>
    <property type="match status" value="1"/>
</dbReference>
<dbReference type="InterPro" id="IPR006680">
    <property type="entry name" value="Amidohydro-rel"/>
</dbReference>
<dbReference type="InterPro" id="IPR005920">
    <property type="entry name" value="HutI"/>
</dbReference>
<dbReference type="InterPro" id="IPR011059">
    <property type="entry name" value="Metal-dep_hydrolase_composite"/>
</dbReference>
<dbReference type="InterPro" id="IPR032466">
    <property type="entry name" value="Metal_Hydrolase"/>
</dbReference>
<dbReference type="NCBIfam" id="TIGR01224">
    <property type="entry name" value="hutI"/>
    <property type="match status" value="1"/>
</dbReference>
<dbReference type="PANTHER" id="PTHR42752">
    <property type="entry name" value="IMIDAZOLONEPROPIONASE"/>
    <property type="match status" value="1"/>
</dbReference>
<dbReference type="PANTHER" id="PTHR42752:SF1">
    <property type="entry name" value="IMIDAZOLONEPROPIONASE-RELATED"/>
    <property type="match status" value="1"/>
</dbReference>
<dbReference type="Pfam" id="PF01979">
    <property type="entry name" value="Amidohydro_1"/>
    <property type="match status" value="1"/>
</dbReference>
<dbReference type="SUPFAM" id="SSF51338">
    <property type="entry name" value="Composite domain of metallo-dependent hydrolases"/>
    <property type="match status" value="1"/>
</dbReference>
<dbReference type="SUPFAM" id="SSF51556">
    <property type="entry name" value="Metallo-dependent hydrolases"/>
    <property type="match status" value="1"/>
</dbReference>